<name>CAC1A_RABIT</name>
<accession>P27884</accession>
<accession>P27883</accession>
<reference key="1">
    <citation type="journal article" date="1991" name="Nature">
        <title>Primary structure and functional expression from complementary DNA of a brain calcium channel.</title>
        <authorList>
            <person name="Mori Y."/>
            <person name="Friedrich T."/>
            <person name="Kim M.-S."/>
            <person name="Mikami A."/>
            <person name="Nakai J."/>
            <person name="Ruth P."/>
            <person name="Bosse E."/>
            <person name="Hofmann F."/>
            <person name="Flockerzi V."/>
            <person name="Furuichi T."/>
            <person name="Mikoshiba K."/>
            <person name="Imoto K."/>
            <person name="Tanabe T."/>
            <person name="Numa S."/>
        </authorList>
    </citation>
    <scope>NUCLEOTIDE SEQUENCE [MRNA]</scope>
    <scope>ALTERNATIVE SPLICING</scope>
    <source>
        <tissue>Brain</tissue>
    </source>
</reference>
<reference key="2">
    <citation type="journal article" date="1994" name="Nature">
        <title>Calcium channel beta-subunit binds to a conserved motif in the I-II cytoplasmic linker of the alpha 1-subunit.</title>
        <authorList>
            <person name="Pragnell M."/>
            <person name="de Waard M."/>
            <person name="Mori Y."/>
            <person name="Tanabe T."/>
            <person name="Snutch T.P."/>
            <person name="Campbell K.P."/>
        </authorList>
    </citation>
    <scope>BETA-SUBUNIT BINDING DOMAIN</scope>
    <scope>MUTAGENESIS OF GLU-386; LEU-389; TYR-392 AND GLU-400</scope>
    <scope>REGION</scope>
</reference>
<reference key="3">
    <citation type="journal article" date="2000" name="J. Gen. Physiol.">
        <title>A hot spot for the interaction of gating modifier toxins with voltage-dependent ion channels.</title>
        <authorList>
            <person name="Winterfield J.R."/>
            <person name="Swartz K.J."/>
        </authorList>
    </citation>
    <scope>FUNCTION</scope>
    <scope>TRANSPORTER ACTIVITY</scope>
    <scope>MUTAGENESIS OF GLU-188 AND GLU-1658</scope>
    <scope>SITE</scope>
</reference>
<proteinExistence type="evidence at protein level"/>
<organism>
    <name type="scientific">Oryctolagus cuniculus</name>
    <name type="common">Rabbit</name>
    <dbReference type="NCBI Taxonomy" id="9986"/>
    <lineage>
        <taxon>Eukaryota</taxon>
        <taxon>Metazoa</taxon>
        <taxon>Chordata</taxon>
        <taxon>Craniata</taxon>
        <taxon>Vertebrata</taxon>
        <taxon>Euteleostomi</taxon>
        <taxon>Mammalia</taxon>
        <taxon>Eutheria</taxon>
        <taxon>Euarchontoglires</taxon>
        <taxon>Glires</taxon>
        <taxon>Lagomorpha</taxon>
        <taxon>Leporidae</taxon>
        <taxon>Oryctolagus</taxon>
    </lineage>
</organism>
<protein>
    <recommendedName>
        <fullName>Voltage-dependent P/Q-type calcium channel subunit alpha-1A</fullName>
    </recommendedName>
    <alternativeName>
        <fullName>Brain calcium channel I</fullName>
        <shortName>BI</shortName>
    </alternativeName>
    <alternativeName>
        <fullName>Calcium channel, L type, alpha-1 polypeptide isoform 4</fullName>
    </alternativeName>
    <alternativeName>
        <fullName>Voltage-gated calcium channel subunit alpha Cav2.1</fullName>
    </alternativeName>
</protein>
<feature type="chain" id="PRO_0000053918" description="Voltage-dependent P/Q-type calcium channel subunit alpha-1A">
    <location>
        <begin position="1"/>
        <end position="2424"/>
    </location>
</feature>
<feature type="topological domain" description="Cytoplasmic" evidence="6">
    <location>
        <begin position="1"/>
        <end position="98"/>
    </location>
</feature>
<feature type="transmembrane region" description="Helical; Name=S1 of repeat I" evidence="6">
    <location>
        <begin position="99"/>
        <end position="117"/>
    </location>
</feature>
<feature type="topological domain" description="Extracellular" evidence="6">
    <location>
        <begin position="118"/>
        <end position="135"/>
    </location>
</feature>
<feature type="transmembrane region" description="Helical; Name=S2 of repeat I" evidence="6">
    <location>
        <begin position="136"/>
        <end position="155"/>
    </location>
</feature>
<feature type="topological domain" description="Cytoplasmic" evidence="6">
    <location>
        <begin position="156"/>
        <end position="167"/>
    </location>
</feature>
<feature type="transmembrane region" description="Helical; Name=S3 of repeat I" evidence="6">
    <location>
        <begin position="168"/>
        <end position="185"/>
    </location>
</feature>
<feature type="topological domain" description="Extracellular" evidence="6">
    <location>
        <begin position="186"/>
        <end position="190"/>
    </location>
</feature>
<feature type="transmembrane region" description="Helical; Name=S4 of repeat I" evidence="6">
    <location>
        <begin position="191"/>
        <end position="209"/>
    </location>
</feature>
<feature type="topological domain" description="Cytoplasmic" evidence="6">
    <location>
        <begin position="210"/>
        <end position="228"/>
    </location>
</feature>
<feature type="transmembrane region" description="Helical; Name=S5 of repeat I" evidence="6">
    <location>
        <begin position="229"/>
        <end position="248"/>
    </location>
</feature>
<feature type="topological domain" description="Extracellular" evidence="6">
    <location>
        <begin position="249"/>
        <end position="335"/>
    </location>
</feature>
<feature type="transmembrane region" description="Helical; Name=S6 of repeat I" evidence="6">
    <location>
        <begin position="336"/>
        <end position="360"/>
    </location>
</feature>
<feature type="topological domain" description="Cytoplasmic" evidence="6">
    <location>
        <begin position="361"/>
        <end position="487"/>
    </location>
</feature>
<feature type="transmembrane region" description="Helical; Name=S1 of repeat II" evidence="6">
    <location>
        <begin position="488"/>
        <end position="506"/>
    </location>
</feature>
<feature type="topological domain" description="Extracellular" evidence="6">
    <location>
        <begin position="507"/>
        <end position="521"/>
    </location>
</feature>
<feature type="transmembrane region" description="Helical; Name=S2 of repeat II" evidence="6">
    <location>
        <begin position="522"/>
        <end position="541"/>
    </location>
</feature>
<feature type="topological domain" description="Cytoplasmic" evidence="6">
    <location>
        <begin position="542"/>
        <end position="549"/>
    </location>
</feature>
<feature type="transmembrane region" description="Helical; Name=S3 of repeat II" evidence="6">
    <location>
        <begin position="550"/>
        <end position="568"/>
    </location>
</feature>
<feature type="topological domain" description="Extracellular" evidence="6">
    <location>
        <begin position="569"/>
        <end position="578"/>
    </location>
</feature>
<feature type="transmembrane region" description="Helical; Name=S4 of repeat II" evidence="6">
    <location>
        <begin position="579"/>
        <end position="597"/>
    </location>
</feature>
<feature type="topological domain" description="Cytoplasmic" evidence="6">
    <location>
        <begin position="598"/>
        <end position="616"/>
    </location>
</feature>
<feature type="transmembrane region" description="Helical; Name=S5 of repeat II" evidence="6">
    <location>
        <begin position="617"/>
        <end position="636"/>
    </location>
</feature>
<feature type="topological domain" description="Extracellular" evidence="6">
    <location>
        <begin position="637"/>
        <end position="689"/>
    </location>
</feature>
<feature type="transmembrane region" description="Helical; Name=S6 of repeat II" evidence="6">
    <location>
        <begin position="690"/>
        <end position="714"/>
    </location>
</feature>
<feature type="topological domain" description="Cytoplasmic" evidence="6">
    <location>
        <begin position="715"/>
        <end position="1253"/>
    </location>
</feature>
<feature type="transmembrane region" description="Helical; Name=S1 of repeat III" evidence="6">
    <location>
        <begin position="1254"/>
        <end position="1272"/>
    </location>
</feature>
<feature type="topological domain" description="Extracellular" evidence="6">
    <location>
        <begin position="1273"/>
        <end position="1288"/>
    </location>
</feature>
<feature type="transmembrane region" description="Helical; Name=S2 of repeat III" evidence="6">
    <location>
        <begin position="1289"/>
        <end position="1308"/>
    </location>
</feature>
<feature type="topological domain" description="Cytoplasmic" evidence="6">
    <location>
        <begin position="1309"/>
        <end position="1320"/>
    </location>
</feature>
<feature type="transmembrane region" description="Helical; Name=S3 of repeat III" evidence="6">
    <location>
        <begin position="1321"/>
        <end position="1339"/>
    </location>
</feature>
<feature type="topological domain" description="Extracellular" evidence="6">
    <location>
        <begin position="1340"/>
        <end position="1350"/>
    </location>
</feature>
<feature type="transmembrane region" description="Helical; Name=S4 of repeat III" evidence="6">
    <location>
        <begin position="1351"/>
        <end position="1369"/>
    </location>
</feature>
<feature type="topological domain" description="Cytoplasmic" evidence="6">
    <location>
        <begin position="1370"/>
        <end position="1388"/>
    </location>
</feature>
<feature type="transmembrane region" description="Helical; Name=S5 of repeat III" evidence="6">
    <location>
        <begin position="1389"/>
        <end position="1408"/>
    </location>
</feature>
<feature type="topological domain" description="Extracellular" evidence="6">
    <location>
        <begin position="1409"/>
        <end position="1495"/>
    </location>
</feature>
<feature type="transmembrane region" description="Helical; Name=S6 of repeat III" evidence="6">
    <location>
        <begin position="1496"/>
        <end position="1520"/>
    </location>
</feature>
<feature type="topological domain" description="Cytoplasmic" evidence="6">
    <location>
        <begin position="1521"/>
        <end position="1575"/>
    </location>
</feature>
<feature type="transmembrane region" description="Helical; Name=S1 of repeat IV" evidence="6">
    <location>
        <begin position="1576"/>
        <end position="1604"/>
    </location>
</feature>
<feature type="topological domain" description="Extracellular" evidence="6">
    <location>
        <begin position="1605"/>
        <end position="1609"/>
    </location>
</feature>
<feature type="transmembrane region" description="Helical; Name=S2 of repeat IV" evidence="6">
    <location>
        <begin position="1610"/>
        <end position="1629"/>
    </location>
</feature>
<feature type="topological domain" description="Cytoplasmic" evidence="6">
    <location>
        <begin position="1630"/>
        <end position="1637"/>
    </location>
</feature>
<feature type="transmembrane region" description="Helical; Name=S3 of repeat IV" evidence="6">
    <location>
        <begin position="1638"/>
        <end position="1656"/>
    </location>
</feature>
<feature type="topological domain" description="Extracellular" evidence="6">
    <location>
        <begin position="1657"/>
        <end position="1665"/>
    </location>
</feature>
<feature type="transmembrane region" description="Helical; Name=S4 of repeat IV" evidence="6">
    <location>
        <begin position="1666"/>
        <end position="1684"/>
    </location>
</feature>
<feature type="topological domain" description="Cytoplasmic" evidence="6">
    <location>
        <begin position="1685"/>
        <end position="1703"/>
    </location>
</feature>
<feature type="transmembrane region" description="Helical; Name=S5 of repeat IV" evidence="6">
    <location>
        <begin position="1704"/>
        <end position="1723"/>
    </location>
</feature>
<feature type="topological domain" description="Extracellular" evidence="6">
    <location>
        <begin position="1724"/>
        <end position="1795"/>
    </location>
</feature>
<feature type="transmembrane region" description="Helical; Name=S6 of repeat IV" evidence="6">
    <location>
        <begin position="1796"/>
        <end position="1820"/>
    </location>
</feature>
<feature type="topological domain" description="Cytoplasmic" evidence="6">
    <location>
        <begin position="1821"/>
        <end position="2424"/>
    </location>
</feature>
<feature type="repeat" description="I">
    <location>
        <begin position="85"/>
        <end position="363"/>
    </location>
</feature>
<feature type="repeat" description="II">
    <location>
        <begin position="473"/>
        <end position="717"/>
    </location>
</feature>
<feature type="repeat" description="III">
    <location>
        <begin position="1240"/>
        <end position="1523"/>
    </location>
</feature>
<feature type="repeat" description="IV">
    <location>
        <begin position="1560"/>
        <end position="1823"/>
    </location>
</feature>
<feature type="region of interest" description="Binding to the beta subunit" evidence="9">
    <location>
        <begin position="383"/>
        <end position="400"/>
    </location>
</feature>
<feature type="region of interest" description="Disordered" evidence="7">
    <location>
        <begin position="819"/>
        <end position="1229"/>
    </location>
</feature>
<feature type="region of interest" description="Disordered" evidence="7">
    <location>
        <begin position="1997"/>
        <end position="2424"/>
    </location>
</feature>
<feature type="compositionally biased region" description="Basic and acidic residues" evidence="7">
    <location>
        <begin position="893"/>
        <end position="912"/>
    </location>
</feature>
<feature type="compositionally biased region" description="Basic and acidic residues" evidence="7">
    <location>
        <begin position="922"/>
        <end position="931"/>
    </location>
</feature>
<feature type="compositionally biased region" description="Basic and acidic residues" evidence="7">
    <location>
        <begin position="969"/>
        <end position="996"/>
    </location>
</feature>
<feature type="compositionally biased region" description="Polar residues" evidence="7">
    <location>
        <begin position="1053"/>
        <end position="1065"/>
    </location>
</feature>
<feature type="compositionally biased region" description="Low complexity" evidence="7">
    <location>
        <begin position="1110"/>
        <end position="1140"/>
    </location>
</feature>
<feature type="compositionally biased region" description="Polar residues" evidence="7">
    <location>
        <begin position="1151"/>
        <end position="1168"/>
    </location>
</feature>
<feature type="compositionally biased region" description="Basic and acidic residues" evidence="7">
    <location>
        <begin position="1204"/>
        <end position="1214"/>
    </location>
</feature>
<feature type="compositionally biased region" description="Polar residues" evidence="7">
    <location>
        <begin position="2037"/>
        <end position="2053"/>
    </location>
</feature>
<feature type="compositionally biased region" description="Basic and acidic residues" evidence="7">
    <location>
        <begin position="2074"/>
        <end position="2090"/>
    </location>
</feature>
<feature type="compositionally biased region" description="Basic and acidic residues" evidence="7">
    <location>
        <begin position="2142"/>
        <end position="2159"/>
    </location>
</feature>
<feature type="compositionally biased region" description="Basic and acidic residues" evidence="7">
    <location>
        <begin position="2200"/>
        <end position="2210"/>
    </location>
</feature>
<feature type="compositionally biased region" description="Basic residues" evidence="7">
    <location>
        <begin position="2211"/>
        <end position="2229"/>
    </location>
</feature>
<feature type="compositionally biased region" description="Low complexity" evidence="7">
    <location>
        <begin position="2249"/>
        <end position="2262"/>
    </location>
</feature>
<feature type="compositionally biased region" description="Basic residues" evidence="7">
    <location>
        <begin position="2280"/>
        <end position="2305"/>
    </location>
</feature>
<feature type="binding site" evidence="3">
    <location>
        <position position="318"/>
    </location>
    <ligand>
        <name>Ca(2+)</name>
        <dbReference type="ChEBI" id="CHEBI:29108"/>
    </ligand>
</feature>
<feature type="binding site" evidence="3">
    <location>
        <position position="668"/>
    </location>
    <ligand>
        <name>Ca(2+)</name>
        <dbReference type="ChEBI" id="CHEBI:29108"/>
    </ligand>
</feature>
<feature type="binding site" evidence="3">
    <location>
        <position position="1469"/>
    </location>
    <ligand>
        <name>Ca(2+)</name>
        <dbReference type="ChEBI" id="CHEBI:29108"/>
    </ligand>
</feature>
<feature type="site" description="Binds to omega-Aga-IVA" evidence="8">
    <location>
        <position position="1658"/>
    </location>
</feature>
<feature type="modified residue" description="Phosphothreonine" evidence="5">
    <location>
        <position position="409"/>
    </location>
</feature>
<feature type="modified residue" description="Phosphoserine" evidence="5">
    <location>
        <position position="448"/>
    </location>
</feature>
<feature type="modified residue" description="Phosphoserine" evidence="5">
    <location>
        <position position="451"/>
    </location>
</feature>
<feature type="modified residue" description="Phosphoserine" evidence="5">
    <location>
        <position position="750"/>
    </location>
</feature>
<feature type="modified residue" description="Phosphoserine" evidence="5">
    <location>
        <position position="753"/>
    </location>
</feature>
<feature type="modified residue" description="Phosphoserine" evidence="5">
    <location>
        <position position="790"/>
    </location>
</feature>
<feature type="modified residue" description="Phosphoserine" evidence="5">
    <location>
        <position position="1091"/>
    </location>
</feature>
<feature type="modified residue" description="Phosphoserine" evidence="5">
    <location>
        <position position="1104"/>
    </location>
</feature>
<feature type="modified residue" description="Phosphothreonine" evidence="5">
    <location>
        <position position="1993"/>
    </location>
</feature>
<feature type="modified residue" description="Phosphoserine" evidence="4">
    <location>
        <position position="2054"/>
    </location>
</feature>
<feature type="modified residue" description="Phosphoserine" evidence="5">
    <location>
        <position position="2072"/>
    </location>
</feature>
<feature type="modified residue" description="Phosphoserine" evidence="4">
    <location>
        <position position="2084"/>
    </location>
</feature>
<feature type="modified residue" description="Phosphoserine" evidence="4">
    <location>
        <position position="2086"/>
    </location>
</feature>
<feature type="modified residue" description="Phosphoserine" evidence="5">
    <location>
        <position position="2127"/>
    </location>
</feature>
<feature type="modified residue" description="Phosphoserine" evidence="4">
    <location>
        <position position="2148"/>
    </location>
</feature>
<feature type="glycosylation site" description="N-linked (GlcNAc...) asparagine" evidence="6">
    <location>
        <position position="283"/>
    </location>
</feature>
<feature type="glycosylation site" description="N-linked (GlcNAc...) asparagine" evidence="6">
    <location>
        <position position="1665"/>
    </location>
</feature>
<feature type="splice variant" id="VSP_000877" description="In isoform CBP103." evidence="10">
    <location>
        <begin position="772"/>
        <end position="1120"/>
    </location>
</feature>
<feature type="splice variant" id="VSP_000876" description="In isoform CBP107." evidence="10">
    <location>
        <begin position="772"/>
        <end position="1051"/>
    </location>
</feature>
<feature type="splice variant" id="VSP_000878" description="In isoform CBP101." evidence="10">
    <original>LYRDMYAMLRHMPPPLGLGKNCPARVAY</original>
    <variation>HYKDMYSLLRVISPPLGLGKKCPHRVAC</variation>
    <location>
        <begin position="1857"/>
        <end position="1884"/>
    </location>
</feature>
<feature type="splice variant" id="VSP_000879" description="In isoform BI-1." evidence="10">
    <original>RGPGRVSPGVSARRRRRGPVARVRPARAPALAHARARARAPARL</original>
    <variation>PAAADKERYGPQDRPDHGHGRARARDQRWSRSPSEGREHTTHRQ</variation>
    <location>
        <begin position="2230"/>
        <end position="2273"/>
    </location>
</feature>
<feature type="splice variant" id="VSP_000880" description="In isoform BI-1." evidence="10">
    <location>
        <begin position="2274"/>
        <end position="2424"/>
    </location>
</feature>
<feature type="sequence variant" description="In isoform CBP315.">
    <location>
        <position position="419"/>
    </location>
</feature>
<feature type="sequence variant" description="In isoform CBS.">
    <original>A</original>
    <variation>T</variation>
    <location>
        <position position="877"/>
    </location>
</feature>
<feature type="sequence variant" description="In isoform CBS.">
    <original>S</original>
    <variation>N</variation>
    <location>
        <position position="1104"/>
    </location>
</feature>
<feature type="mutagenesis site" description="No change in voltage-gated calcium channel activity inhibition by omega-Aga-IVA." evidence="8">
    <original>E</original>
    <variation>K</variation>
    <location>
        <position position="188"/>
    </location>
</feature>
<feature type="mutagenesis site" description="Reduced beta-subunit interaction." evidence="9">
    <original>E</original>
    <variation>S</variation>
    <location>
        <position position="386"/>
    </location>
</feature>
<feature type="mutagenesis site" description="Reduced beta-subunit interaction." evidence="9">
    <original>L</original>
    <variation>H</variation>
    <location>
        <position position="389"/>
    </location>
</feature>
<feature type="mutagenesis site" description="Reduced beta-subunit interaction." evidence="9">
    <original>Y</original>
    <variation>S</variation>
    <location>
        <position position="392"/>
    </location>
</feature>
<feature type="mutagenesis site" description="No effect on beta-subunit interaction." evidence="9">
    <original>E</original>
    <variation>A</variation>
    <location>
        <position position="400"/>
    </location>
</feature>
<feature type="mutagenesis site" description="Loss of voltage-gated calcium channel activity inhibition by omega-Aga-IVA." evidence="8">
    <original>E</original>
    <variation>K</variation>
    <location>
        <position position="1658"/>
    </location>
</feature>
<feature type="helix" evidence="11">
    <location>
        <begin position="1963"/>
        <end position="1979"/>
    </location>
</feature>
<keyword id="KW-0002">3D-structure</keyword>
<keyword id="KW-0025">Alternative splicing</keyword>
<keyword id="KW-0106">Calcium</keyword>
<keyword id="KW-0107">Calcium channel</keyword>
<keyword id="KW-0109">Calcium transport</keyword>
<keyword id="KW-1003">Cell membrane</keyword>
<keyword id="KW-1015">Disulfide bond</keyword>
<keyword id="KW-0325">Glycoprotein</keyword>
<keyword id="KW-0407">Ion channel</keyword>
<keyword id="KW-0406">Ion transport</keyword>
<keyword id="KW-0472">Membrane</keyword>
<keyword id="KW-0479">Metal-binding</keyword>
<keyword id="KW-0597">Phosphoprotein</keyword>
<keyword id="KW-1185">Reference proteome</keyword>
<keyword id="KW-0677">Repeat</keyword>
<keyword id="KW-0812">Transmembrane</keyword>
<keyword id="KW-1133">Transmembrane helix</keyword>
<keyword id="KW-0813">Transport</keyword>
<keyword id="KW-0851">Voltage-gated channel</keyword>
<evidence type="ECO:0000250" key="1"/>
<evidence type="ECO:0000250" key="2">
    <source>
        <dbReference type="UniProtKB" id="O00555"/>
    </source>
</evidence>
<evidence type="ECO:0000250" key="3">
    <source>
        <dbReference type="UniProtKB" id="P07293"/>
    </source>
</evidence>
<evidence type="ECO:0000250" key="4">
    <source>
        <dbReference type="UniProtKB" id="P54282"/>
    </source>
</evidence>
<evidence type="ECO:0000250" key="5">
    <source>
        <dbReference type="UniProtKB" id="P97445"/>
    </source>
</evidence>
<evidence type="ECO:0000255" key="6"/>
<evidence type="ECO:0000256" key="7">
    <source>
        <dbReference type="SAM" id="MobiDB-lite"/>
    </source>
</evidence>
<evidence type="ECO:0000269" key="8">
    <source>
    </source>
</evidence>
<evidence type="ECO:0000269" key="9">
    <source>
    </source>
</evidence>
<evidence type="ECO:0000305" key="10"/>
<evidence type="ECO:0007829" key="11">
    <source>
        <dbReference type="PDB" id="3DVM"/>
    </source>
</evidence>
<gene>
    <name type="primary">CACNA1A</name>
    <name type="synonym">CACH4</name>
    <name type="synonym">CACN3</name>
    <name type="synonym">CACNL1A4</name>
</gene>
<dbReference type="EMBL" id="X57477">
    <property type="protein sequence ID" value="CAA40715.1"/>
    <property type="molecule type" value="mRNA"/>
</dbReference>
<dbReference type="EMBL" id="X57689">
    <property type="protein sequence ID" value="CAA40872.1"/>
    <property type="molecule type" value="mRNA"/>
</dbReference>
<dbReference type="EMBL" id="X57476">
    <property type="protein sequence ID" value="CAA40714.1"/>
    <property type="molecule type" value="mRNA"/>
</dbReference>
<dbReference type="EMBL" id="X57688">
    <property type="protein sequence ID" value="CAA40871.1"/>
    <property type="molecule type" value="mRNA"/>
</dbReference>
<dbReference type="PIR" id="I46477">
    <property type="entry name" value="I46477"/>
</dbReference>
<dbReference type="PIR" id="I46480">
    <property type="entry name" value="I46480"/>
</dbReference>
<dbReference type="RefSeq" id="NP_001095163.1">
    <molecule id="P27884-2"/>
    <property type="nucleotide sequence ID" value="NM_001101693.1"/>
</dbReference>
<dbReference type="PDB" id="3DVM">
    <property type="method" value="X-ray"/>
    <property type="resolution" value="2.60 A"/>
    <property type="chains" value="B=1963-1982"/>
</dbReference>
<dbReference type="PDBsum" id="3DVM"/>
<dbReference type="BMRB" id="P27884"/>
<dbReference type="SMR" id="P27884"/>
<dbReference type="BioGRID" id="1172286">
    <property type="interactions" value="4"/>
</dbReference>
<dbReference type="DIP" id="DIP-29591N"/>
<dbReference type="FunCoup" id="P27884">
    <property type="interactions" value="286"/>
</dbReference>
<dbReference type="IntAct" id="P27884">
    <property type="interactions" value="3"/>
</dbReference>
<dbReference type="STRING" id="9986.ENSOCUP00000010319"/>
<dbReference type="GlyCosmos" id="P27884">
    <property type="glycosylation" value="2 sites, No reported glycans"/>
</dbReference>
<dbReference type="PaxDb" id="9986-ENSOCUP00000010319"/>
<dbReference type="GeneID" id="100009265"/>
<dbReference type="KEGG" id="ocu:100009265"/>
<dbReference type="CTD" id="773"/>
<dbReference type="eggNOG" id="KOG2301">
    <property type="taxonomic scope" value="Eukaryota"/>
</dbReference>
<dbReference type="InParanoid" id="P27884"/>
<dbReference type="OrthoDB" id="431720at2759"/>
<dbReference type="EvolutionaryTrace" id="P27884"/>
<dbReference type="Proteomes" id="UP000001811">
    <property type="component" value="Unplaced"/>
</dbReference>
<dbReference type="GO" id="GO:0043025">
    <property type="term" value="C:neuronal cell body"/>
    <property type="evidence" value="ECO:0007669"/>
    <property type="project" value="TreeGrafter"/>
</dbReference>
<dbReference type="GO" id="GO:0005886">
    <property type="term" value="C:plasma membrane"/>
    <property type="evidence" value="ECO:0000314"/>
    <property type="project" value="UniProtKB"/>
</dbReference>
<dbReference type="GO" id="GO:0098793">
    <property type="term" value="C:presynapse"/>
    <property type="evidence" value="ECO:0007669"/>
    <property type="project" value="GOC"/>
</dbReference>
<dbReference type="GO" id="GO:0005891">
    <property type="term" value="C:voltage-gated calcium channel complex"/>
    <property type="evidence" value="ECO:0000314"/>
    <property type="project" value="UniProtKB"/>
</dbReference>
<dbReference type="GO" id="GO:0008331">
    <property type="term" value="F:high voltage-gated calcium channel activity"/>
    <property type="evidence" value="ECO:0007669"/>
    <property type="project" value="TreeGrafter"/>
</dbReference>
<dbReference type="GO" id="GO:0046872">
    <property type="term" value="F:metal ion binding"/>
    <property type="evidence" value="ECO:0007669"/>
    <property type="project" value="UniProtKB-KW"/>
</dbReference>
<dbReference type="GO" id="GO:0005245">
    <property type="term" value="F:voltage-gated calcium channel activity"/>
    <property type="evidence" value="ECO:0000250"/>
    <property type="project" value="UniProtKB"/>
</dbReference>
<dbReference type="GO" id="GO:0099626">
    <property type="term" value="F:voltage-gated calcium channel activity involved in regulation of presynaptic cytosolic calcium levels"/>
    <property type="evidence" value="ECO:0000314"/>
    <property type="project" value="SynGO"/>
</dbReference>
<dbReference type="GO" id="GO:0098703">
    <property type="term" value="P:calcium ion import across plasma membrane"/>
    <property type="evidence" value="ECO:0007669"/>
    <property type="project" value="TreeGrafter"/>
</dbReference>
<dbReference type="GO" id="GO:0070588">
    <property type="term" value="P:calcium ion transmembrane transport"/>
    <property type="evidence" value="ECO:0007669"/>
    <property type="project" value="GOC"/>
</dbReference>
<dbReference type="GO" id="GO:0007268">
    <property type="term" value="P:chemical synaptic transmission"/>
    <property type="evidence" value="ECO:0007669"/>
    <property type="project" value="TreeGrafter"/>
</dbReference>
<dbReference type="GO" id="GO:0007204">
    <property type="term" value="P:positive regulation of cytosolic calcium ion concentration"/>
    <property type="evidence" value="ECO:0000250"/>
    <property type="project" value="UniProtKB"/>
</dbReference>
<dbReference type="FunFam" id="1.20.120.350:FF:000001">
    <property type="entry name" value="Voltage-dependent L-type calcium channel subunit alpha"/>
    <property type="match status" value="1"/>
</dbReference>
<dbReference type="FunFam" id="1.10.238.10:FF:000063">
    <property type="entry name" value="Voltage-dependent N-type calcium channel subunit alpha"/>
    <property type="match status" value="1"/>
</dbReference>
<dbReference type="FunFam" id="1.20.120.350:FF:000011">
    <property type="entry name" value="Voltage-dependent N-type calcium channel subunit alpha"/>
    <property type="match status" value="1"/>
</dbReference>
<dbReference type="FunFam" id="1.20.120.350:FF:000013">
    <property type="entry name" value="Voltage-dependent N-type calcium channel subunit alpha"/>
    <property type="match status" value="1"/>
</dbReference>
<dbReference type="FunFam" id="1.20.120.350:FF:000015">
    <property type="entry name" value="Voltage-dependent N-type calcium channel subunit alpha"/>
    <property type="match status" value="1"/>
</dbReference>
<dbReference type="FunFam" id="1.10.287.70:FF:000023">
    <property type="entry name" value="Voltage-dependent R-type calcium channel subunit alpha"/>
    <property type="match status" value="1"/>
</dbReference>
<dbReference type="FunFam" id="1.10.287.70:FF:000025">
    <property type="entry name" value="Voltage-dependent R-type calcium channel subunit alpha"/>
    <property type="match status" value="1"/>
</dbReference>
<dbReference type="Gene3D" id="1.10.287.70">
    <property type="match status" value="4"/>
</dbReference>
<dbReference type="Gene3D" id="6.10.250.2180">
    <property type="match status" value="1"/>
</dbReference>
<dbReference type="Gene3D" id="6.10.250.2500">
    <property type="match status" value="1"/>
</dbReference>
<dbReference type="Gene3D" id="1.20.120.350">
    <property type="entry name" value="Voltage-gated potassium channels. Chain C"/>
    <property type="match status" value="4"/>
</dbReference>
<dbReference type="InterPro" id="IPR005448">
    <property type="entry name" value="CACNA1A"/>
</dbReference>
<dbReference type="InterPro" id="IPR031649">
    <property type="entry name" value="GPHH_dom"/>
</dbReference>
<dbReference type="InterPro" id="IPR005821">
    <property type="entry name" value="Ion_trans_dom"/>
</dbReference>
<dbReference type="InterPro" id="IPR014873">
    <property type="entry name" value="VDCC_a1su_IQ"/>
</dbReference>
<dbReference type="InterPro" id="IPR050599">
    <property type="entry name" value="VDCC_alpha-1_subunit"/>
</dbReference>
<dbReference type="InterPro" id="IPR002077">
    <property type="entry name" value="VDCCAlpha1"/>
</dbReference>
<dbReference type="InterPro" id="IPR027359">
    <property type="entry name" value="Volt_channel_dom_sf"/>
</dbReference>
<dbReference type="PANTHER" id="PTHR45628">
    <property type="entry name" value="VOLTAGE-DEPENDENT CALCIUM CHANNEL TYPE A SUBUNIT ALPHA-1"/>
    <property type="match status" value="1"/>
</dbReference>
<dbReference type="PANTHER" id="PTHR45628:SF3">
    <property type="entry name" value="VOLTAGE-DEPENDENT P_Q-TYPE CALCIUM CHANNEL SUBUNIT ALPHA-1A"/>
    <property type="match status" value="1"/>
</dbReference>
<dbReference type="Pfam" id="PF08763">
    <property type="entry name" value="Ca_chan_IQ"/>
    <property type="match status" value="1"/>
</dbReference>
<dbReference type="Pfam" id="PF16905">
    <property type="entry name" value="GPHH"/>
    <property type="match status" value="1"/>
</dbReference>
<dbReference type="Pfam" id="PF00520">
    <property type="entry name" value="Ion_trans"/>
    <property type="match status" value="4"/>
</dbReference>
<dbReference type="PRINTS" id="PR00167">
    <property type="entry name" value="CACHANNEL"/>
</dbReference>
<dbReference type="PRINTS" id="PR01632">
    <property type="entry name" value="PQVDCCALPHA1"/>
</dbReference>
<dbReference type="SMART" id="SM01062">
    <property type="entry name" value="Ca_chan_IQ"/>
    <property type="match status" value="1"/>
</dbReference>
<dbReference type="SUPFAM" id="SSF81324">
    <property type="entry name" value="Voltage-gated potassium channels"/>
    <property type="match status" value="4"/>
</dbReference>
<comment type="function">
    <text evidence="4 8">Voltage-sensitive calcium channels (VSCC) mediate the entry of calcium ions into excitable cells and are also involved in a variety of calcium-dependent processes, including muscle contraction, hormone or neurotransmitter release, gene expression, cell motility, cell division and cell death. The isoform alpha-1A gives rise to P and/or Q-type calcium currents. P/Q-type calcium channels belong to the 'high-voltage activated' (HVA) group and are specifically blocked by the spider omega-agatoxin-IVA (AC P54282) (By similarity). They are however insensitive to dihydropyridines (DHP).</text>
</comment>
<comment type="catalytic activity">
    <reaction evidence="8">
        <text>Ca(2+)(in) = Ca(2+)(out)</text>
        <dbReference type="Rhea" id="RHEA:29671"/>
        <dbReference type="ChEBI" id="CHEBI:29108"/>
    </reaction>
</comment>
<comment type="subunit">
    <text evidence="1 2 4">Voltage-dependent calcium channels are multisubunit complexes, consisting of alpha-1, alpha-2, beta and delta subunits in a 1:1:1:1 ratio. The channel activity is directed by the pore-forming and voltage-sensitive alpha-1 subunit. In many cases, this subunit is sufficient to generate voltage-sensitive calcium channel activity. The auxiliary subunits beta and alpha-2/delta linked by a disulfide bridge regulate the channel activity. Interacts with CABP1 (By similarity). Interacts with the spider omega-agatoxin-IVA (AC P30288). Interacts with TSPOAP1 (By similarity).</text>
</comment>
<comment type="interaction">
    <interactant intactId="EBI-15685548">
        <id>P27884</id>
    </interactant>
    <interactant intactId="EBI-397435">
        <id>P62158</id>
        <label>CALM3</label>
    </interactant>
    <organismsDiffer>true</organismsDiffer>
    <experiments>3</experiments>
</comment>
<comment type="interaction">
    <interactant intactId="EBI-15685548">
        <id>P27884</id>
    </interactant>
    <interactant intactId="EBI-744104">
        <id>P55040</id>
        <label>GEM</label>
    </interactant>
    <organismsDiffer>true</organismsDiffer>
    <experiments>2</experiments>
</comment>
<comment type="subcellular location">
    <subcellularLocation>
        <location evidence="2">Cell membrane</location>
        <topology evidence="6">Multi-pass membrane protein</topology>
    </subcellularLocation>
</comment>
<comment type="alternative products">
    <event type="alternative splicing"/>
    <isoform>
        <id>P27884-1</id>
        <name>BI-2</name>
        <name>1A-2</name>
        <sequence type="displayed"/>
    </isoform>
    <isoform>
        <id>P27884-2</id>
        <name>BI-1</name>
        <name>1A-1</name>
        <sequence type="described" ref="VSP_000879 VSP_000880"/>
    </isoform>
    <isoform>
        <id>P27884-3</id>
        <name>CBP101</name>
        <name>CBP109</name>
        <sequence type="described" ref="VSP_000878"/>
    </isoform>
    <isoform>
        <id>P27884-4</id>
        <name>CBP103</name>
        <sequence type="described" ref="VSP_000877"/>
    </isoform>
    <isoform>
        <id>P27884-5</id>
        <name>CBP107</name>
        <sequence type="described" ref="VSP_000876"/>
    </isoform>
</comment>
<comment type="tissue specificity">
    <text>Brain specific. Purkinje cells contain predominantly P-type VSCC, the Q-type being a prominent calcium current in cerebellar granule cells.</text>
</comment>
<comment type="domain">
    <text>Each of the four internal repeats contains five hydrophobic transmembrane segments (S1, S2, S3, S5, S6) and one positively charged transmembrane segment (S4). S4 segments probably represent the voltage-sensor and are characterized by a series of positively charged amino acids at every third position.</text>
</comment>
<comment type="similarity">
    <text evidence="10">Belongs to the calcium channel alpha-1 subunit (TC 1.A.1.11) family. CACNA1A subfamily.</text>
</comment>
<sequence>MARFGDEMPARYGGGGAGAAAGVVVGAAGGRGAGGSRQGGQPGAQRMYKQSMAQRARTMALYNPIPVRQNCLTVNRSLFLFSEDNVVRKYAKKITEWPPFEYMILATIIANCIVLALEQHLPDDDKTPMSERLDDTEPYFIGIFCFEAGIKIIALGFAFHKGSYLRNGWNVMDFVVVLTGILATVGTEFDLRTLRAVRVLRPLKLVSGIPSLQVVLKSIMKAMIPLLQIGLLLFFAILIFAIIGLEFYMGKFHTTCFEEGTDDIQGESPAPCGTEEPARTCPNGTRCQPYWEGPNNGITQFDNILFAVLTVFQCITMEGWTDLLYNSNDASGNTWNWLYFIPLIIIGSFFMLNLVLGVLSGEFAKERERVENRRAFLKLRRQQQIERELNGYMEWISKAEEVILAEDETDVEQRHPFDGALRRATIKKSKTDLLHPEEAEDQLADIASVGSPFARASIKSAKLENSSFFHKKERRMRFYIRRMVKTQAFYWTVLSLVALNTLCVAIVHYNQPEWLSDFLYYAEFIFLGLFMSEMFIKMYGLGTRPYFHSSFNCFDCGVIIGSIFEVIWAVIKPGTSFGISVLRALRLLRIFKVTKYWASLRNLVVSLLNSMKSIISLLFLLFLFIVVFALLGMQLFGGQFNFDEGTPPTNFDTFPAAIMTVFQILTGEDWNEVMYDGIKSQGGVQGGMVFSIYFIVLTLFGNYTLLNVFLAIAVDNLANAQELTKDEQEEEEAVNQKLALQKAKEVAEVSPLSAANMSIAMKEQQKNQKPAKSVWEQRTSEMRKQNLLASREALYSEMDPEERWKASYARHLRPDMKTHLDRPLVVDPQENRNNNTNKSRVAEPTVDQRLGQQRAEDFLRKQARHHDRARDPSAHAAAGLDARRPWAGSQEAELSREGPYGRESDHQAREGGLEPPGFWEGEAERGKAGDPHRRHAHRQGVGGSGGSRSGSPRTGTADGEPRRHRVHRRPGEDGPDDKAERRGRHREGSRPARSGEGEAEGPDGGGGGGGERRRRHRHGPPPAYDPDARRDDRERRHRRRKDTQGSGVPVSGPNLSTTRPIQQDLSRQEPPLAEDMDNLKNSRLATAEPVSPHENLSHAGLPQSPAKMGSSTDPAGPTPATAANPQNSTASRRTPNNPGNPSNPGPPKTPENSLIVTNPSTAQTNSAKTARKPDHTTVEIPPACPPPLNHTVVQVNKNANPDPLPKKEDEKKEEVDEGPGEDGPKPMPPYSSMFILSTTNPLRRLCHYILNLRYFEMCILMVIAMSSIALAAEDPVQPNAPRNNVLRYFDYVFTGVFTFEMVIKMIDLGLVLHQGAYFRDLWNILDFIVVSGALVAFAFTGNSKGKDINTIKSLRVLRVLRPLKTIKRLPKLKAVFDCVVNSLKNVFNILIVYMLFMFIFAVVAVQLFKGKFFHCTDESKEFEKDCRGKYLLYEKNEVKARDREWKKYEFHYDNVLWALLTLFTVSTGEGWPQVLKHSVDATFENQGPSPGYRMEMSIFYVVYFVVFPFFFVNIFVALIIITFQEQGDKMMEEYSLEKNERACIDFAISAKPLTRHMPQNKQSFQYRMWQFVVSPPFEYTIMAMIALNTIVLMMKFYGASVAYDNALKVFNIVFTSLFSLECLLKVLAFGILNYFRDAWNIFDFVTVLGSITDILVTEFGNNFINLSFLRLFRAARLIKLLRQGYTIRILLWTFVQSFKALPYVCLLIAMLFFIYAIIGMQVFGNIGIDMEDEDSDEDEFQITEHNNFRTFFQALMLLFRSATGEAWHNIMLSCLSGKPCDKNSGILTPECGNEFAYFYFVSFIFLCSFLMLNLFVAVIMDNFEYLTRDSSILGPHHLDEYVRVWAEYDPAAWGRMLYRDMYAMLRHMPPPLGLGKNCPARVAYKRLLRMDLPVADDNTVHFNSTLMALIRTALDIKIAKGGADKQQMDAELRKEMMAIWPNLSQKTLDLLVTPHKSTDLTVGKIYAAMMIMEYYRQSKAKKLQAMREEQNRTPLMFQRMEPPPDEGGAGQNALPSTQLDPAGGLMAHEDGLKDSPSWVTQRAQEMFQKTGTWSPERAPPADMADSQPKPQSVEMREMSQDGYSDSEHCLPMEGQARAASMPRLPAENQRRRGRPRGSDLSTICDTSPMKRSASVLGPKASRRLDDYSLERVPPEENQRHHPRRRERAHRTSERSLGRYTDVDTGLGTDLSMTTQSGDLPSREREQERGRPKDRKHRPHHHHHHHHHPGRGPGRVSPGVSARRRRRGPVARVRPARAPALAHARARARAPARLLPELRLRRARRPRPRQRRRPRRRRGGGGRALRRAPGPREPLAQDSPGRGPSVCLARAARPAGPQRLLPGPRTGQAPRARLPQKPARSVQRERRGLVLSPPPPPPGELAPRAHPARTPRPGPGDSRSRRGGRRWTASAGKGGGGPRASAPSP</sequence>